<reference key="1">
    <citation type="journal article" date="2005" name="Physiol. Genomics">
        <title>Cross-species analysis of the mammalian beta-defensin gene family: presence of syntenic gene clusters and preferential expression in the male reproductive tract.</title>
        <authorList>
            <person name="Patil A.A."/>
            <person name="Cai Y."/>
            <person name="Sang Y."/>
            <person name="Blecha F."/>
            <person name="Zhang G."/>
        </authorList>
    </citation>
    <scope>NUCLEOTIDE SEQUENCE [MRNA]</scope>
</reference>
<organism>
    <name type="scientific">Pan troglodytes</name>
    <name type="common">Chimpanzee</name>
    <dbReference type="NCBI Taxonomy" id="9598"/>
    <lineage>
        <taxon>Eukaryota</taxon>
        <taxon>Metazoa</taxon>
        <taxon>Chordata</taxon>
        <taxon>Craniata</taxon>
        <taxon>Vertebrata</taxon>
        <taxon>Euteleostomi</taxon>
        <taxon>Mammalia</taxon>
        <taxon>Eutheria</taxon>
        <taxon>Euarchontoglires</taxon>
        <taxon>Primates</taxon>
        <taxon>Haplorrhini</taxon>
        <taxon>Catarrhini</taxon>
        <taxon>Hominidae</taxon>
        <taxon>Pan</taxon>
    </lineage>
</organism>
<name>DB134_PANTR</name>
<gene>
    <name type="primary">DEFB134</name>
</gene>
<keyword id="KW-0044">Antibiotic</keyword>
<keyword id="KW-0929">Antimicrobial</keyword>
<keyword id="KW-0211">Defensin</keyword>
<keyword id="KW-1015">Disulfide bond</keyword>
<keyword id="KW-1185">Reference proteome</keyword>
<keyword id="KW-0964">Secreted</keyword>
<keyword id="KW-0732">Signal</keyword>
<comment type="function">
    <text evidence="3">Has antibacterial activity.</text>
</comment>
<comment type="subcellular location">
    <subcellularLocation>
        <location evidence="3">Secreted</location>
    </subcellularLocation>
</comment>
<comment type="similarity">
    <text evidence="3">Belongs to the beta-defensin family.</text>
</comment>
<evidence type="ECO:0000250" key="1"/>
<evidence type="ECO:0000255" key="2"/>
<evidence type="ECO:0000305" key="3"/>
<sequence>MKPLLVVFVFLFLWDPVLAEMHKKCYKNGICRLECYESEMLVAYCMFQLECCVKGNPAP</sequence>
<protein>
    <recommendedName>
        <fullName>Beta-defensin 134</fullName>
    </recommendedName>
    <alternativeName>
        <fullName>Defensin, beta 134</fullName>
    </alternativeName>
</protein>
<dbReference type="EMBL" id="DQ012085">
    <property type="protein sequence ID" value="AAY59815.1"/>
    <property type="molecule type" value="mRNA"/>
</dbReference>
<dbReference type="RefSeq" id="NP_001123260.1">
    <property type="nucleotide sequence ID" value="NM_001129788.1"/>
</dbReference>
<dbReference type="SMR" id="Q30KJ5"/>
<dbReference type="STRING" id="9598.ENSPTRP00000055433"/>
<dbReference type="PaxDb" id="9598-ENSPTRP00000055433"/>
<dbReference type="GeneID" id="737890"/>
<dbReference type="KEGG" id="ptr:737890"/>
<dbReference type="CTD" id="613211"/>
<dbReference type="eggNOG" id="ENOG502TM3N">
    <property type="taxonomic scope" value="Eukaryota"/>
</dbReference>
<dbReference type="HOGENOM" id="CLU_2830492_0_0_1"/>
<dbReference type="InParanoid" id="Q30KJ5"/>
<dbReference type="OrthoDB" id="10046at9604"/>
<dbReference type="Proteomes" id="UP000002277">
    <property type="component" value="Unplaced"/>
</dbReference>
<dbReference type="GO" id="GO:0005576">
    <property type="term" value="C:extracellular region"/>
    <property type="evidence" value="ECO:0007669"/>
    <property type="project" value="UniProtKB-SubCell"/>
</dbReference>
<dbReference type="GO" id="GO:0042742">
    <property type="term" value="P:defense response to bacterium"/>
    <property type="evidence" value="ECO:0007669"/>
    <property type="project" value="UniProtKB-KW"/>
</dbReference>
<dbReference type="GO" id="GO:0045087">
    <property type="term" value="P:innate immune response"/>
    <property type="evidence" value="ECO:0007669"/>
    <property type="project" value="InterPro"/>
</dbReference>
<dbReference type="InterPro" id="IPR025933">
    <property type="entry name" value="Beta_defensin_dom"/>
</dbReference>
<dbReference type="Pfam" id="PF13841">
    <property type="entry name" value="Defensin_beta_2"/>
    <property type="match status" value="1"/>
</dbReference>
<accession>Q30KJ5</accession>
<proteinExistence type="inferred from homology"/>
<feature type="signal peptide" evidence="2">
    <location>
        <begin position="1"/>
        <end position="19"/>
    </location>
</feature>
<feature type="chain" id="PRO_0000045361" description="Beta-defensin 134">
    <location>
        <begin position="20"/>
        <end position="59"/>
    </location>
</feature>
<feature type="disulfide bond" evidence="1">
    <location>
        <begin position="25"/>
        <end position="51"/>
    </location>
</feature>
<feature type="disulfide bond" evidence="1">
    <location>
        <begin position="31"/>
        <end position="45"/>
    </location>
</feature>
<feature type="disulfide bond" evidence="1">
    <location>
        <begin position="35"/>
        <end position="52"/>
    </location>
</feature>